<feature type="chain" id="PRO_1000204594" description="Glycine--tRNA ligase alpha subunit">
    <location>
        <begin position="1"/>
        <end position="288"/>
    </location>
</feature>
<keyword id="KW-0030">Aminoacyl-tRNA synthetase</keyword>
<keyword id="KW-0067">ATP-binding</keyword>
<keyword id="KW-0963">Cytoplasm</keyword>
<keyword id="KW-0436">Ligase</keyword>
<keyword id="KW-0547">Nucleotide-binding</keyword>
<keyword id="KW-0648">Protein biosynthesis</keyword>
<reference key="1">
    <citation type="journal article" date="2009" name="PLoS ONE">
        <title>Genome sequence of the endosymbiont Rickettsia peacockii and comparison with virulent Rickettsia rickettsii: identification of virulence factors.</title>
        <authorList>
            <person name="Felsheim R.F."/>
            <person name="Kurtti T.J."/>
            <person name="Munderloh U.G."/>
        </authorList>
    </citation>
    <scope>NUCLEOTIDE SEQUENCE [LARGE SCALE GENOMIC DNA]</scope>
    <source>
        <strain>Rustic</strain>
    </source>
</reference>
<evidence type="ECO:0000255" key="1">
    <source>
        <dbReference type="HAMAP-Rule" id="MF_00254"/>
    </source>
</evidence>
<name>SYGA_RICPU</name>
<gene>
    <name evidence="1" type="primary">glyQ</name>
    <name type="ordered locus">RPR_07445</name>
</gene>
<accession>C4K2V4</accession>
<organism>
    <name type="scientific">Rickettsia peacockii (strain Rustic)</name>
    <dbReference type="NCBI Taxonomy" id="562019"/>
    <lineage>
        <taxon>Bacteria</taxon>
        <taxon>Pseudomonadati</taxon>
        <taxon>Pseudomonadota</taxon>
        <taxon>Alphaproteobacteria</taxon>
        <taxon>Rickettsiales</taxon>
        <taxon>Rickettsiaceae</taxon>
        <taxon>Rickettsieae</taxon>
        <taxon>Rickettsia</taxon>
        <taxon>spotted fever group</taxon>
    </lineage>
</organism>
<proteinExistence type="inferred from homology"/>
<dbReference type="EC" id="6.1.1.14" evidence="1"/>
<dbReference type="EMBL" id="CP001227">
    <property type="protein sequence ID" value="ACR47899.1"/>
    <property type="molecule type" value="Genomic_DNA"/>
</dbReference>
<dbReference type="RefSeq" id="WP_012737052.1">
    <property type="nucleotide sequence ID" value="NC_012730.1"/>
</dbReference>
<dbReference type="SMR" id="C4K2V4"/>
<dbReference type="KEGG" id="rpk:RPR_07445"/>
<dbReference type="HOGENOM" id="CLU_057066_1_0_5"/>
<dbReference type="Proteomes" id="UP000005015">
    <property type="component" value="Chromosome"/>
</dbReference>
<dbReference type="GO" id="GO:0005829">
    <property type="term" value="C:cytosol"/>
    <property type="evidence" value="ECO:0007669"/>
    <property type="project" value="TreeGrafter"/>
</dbReference>
<dbReference type="GO" id="GO:0005524">
    <property type="term" value="F:ATP binding"/>
    <property type="evidence" value="ECO:0007669"/>
    <property type="project" value="UniProtKB-UniRule"/>
</dbReference>
<dbReference type="GO" id="GO:0004820">
    <property type="term" value="F:glycine-tRNA ligase activity"/>
    <property type="evidence" value="ECO:0007669"/>
    <property type="project" value="UniProtKB-UniRule"/>
</dbReference>
<dbReference type="GO" id="GO:0006426">
    <property type="term" value="P:glycyl-tRNA aminoacylation"/>
    <property type="evidence" value="ECO:0007669"/>
    <property type="project" value="UniProtKB-UniRule"/>
</dbReference>
<dbReference type="FunFam" id="3.30.930.10:FF:000006">
    <property type="entry name" value="Glycine--tRNA ligase alpha subunit"/>
    <property type="match status" value="1"/>
</dbReference>
<dbReference type="Gene3D" id="3.30.930.10">
    <property type="entry name" value="Bira Bifunctional Protein, Domain 2"/>
    <property type="match status" value="1"/>
</dbReference>
<dbReference type="Gene3D" id="1.20.58.180">
    <property type="entry name" value="Class II aaRS and biotin synthetases, domain 2"/>
    <property type="match status" value="1"/>
</dbReference>
<dbReference type="HAMAP" id="MF_00254">
    <property type="entry name" value="Gly_tRNA_synth_alpha"/>
    <property type="match status" value="1"/>
</dbReference>
<dbReference type="InterPro" id="IPR045864">
    <property type="entry name" value="aa-tRNA-synth_II/BPL/LPL"/>
</dbReference>
<dbReference type="InterPro" id="IPR006194">
    <property type="entry name" value="Gly-tRNA-synth_heterodimer"/>
</dbReference>
<dbReference type="InterPro" id="IPR002310">
    <property type="entry name" value="Gly-tRNA_ligase_asu"/>
</dbReference>
<dbReference type="NCBIfam" id="TIGR00388">
    <property type="entry name" value="glyQ"/>
    <property type="match status" value="1"/>
</dbReference>
<dbReference type="NCBIfam" id="NF006827">
    <property type="entry name" value="PRK09348.1"/>
    <property type="match status" value="1"/>
</dbReference>
<dbReference type="PANTHER" id="PTHR30075:SF2">
    <property type="entry name" value="GLYCINE--TRNA LIGASE, CHLOROPLASTIC_MITOCHONDRIAL 2"/>
    <property type="match status" value="1"/>
</dbReference>
<dbReference type="PANTHER" id="PTHR30075">
    <property type="entry name" value="GLYCYL-TRNA SYNTHETASE"/>
    <property type="match status" value="1"/>
</dbReference>
<dbReference type="Pfam" id="PF02091">
    <property type="entry name" value="tRNA-synt_2e"/>
    <property type="match status" value="1"/>
</dbReference>
<dbReference type="PRINTS" id="PR01044">
    <property type="entry name" value="TRNASYNTHGA"/>
</dbReference>
<dbReference type="SUPFAM" id="SSF55681">
    <property type="entry name" value="Class II aaRS and biotin synthetases"/>
    <property type="match status" value="1"/>
</dbReference>
<dbReference type="PROSITE" id="PS50861">
    <property type="entry name" value="AA_TRNA_LIGASE_II_GLYAB"/>
    <property type="match status" value="1"/>
</dbReference>
<comment type="catalytic activity">
    <reaction evidence="1">
        <text>tRNA(Gly) + glycine + ATP = glycyl-tRNA(Gly) + AMP + diphosphate</text>
        <dbReference type="Rhea" id="RHEA:16013"/>
        <dbReference type="Rhea" id="RHEA-COMP:9664"/>
        <dbReference type="Rhea" id="RHEA-COMP:9683"/>
        <dbReference type="ChEBI" id="CHEBI:30616"/>
        <dbReference type="ChEBI" id="CHEBI:33019"/>
        <dbReference type="ChEBI" id="CHEBI:57305"/>
        <dbReference type="ChEBI" id="CHEBI:78442"/>
        <dbReference type="ChEBI" id="CHEBI:78522"/>
        <dbReference type="ChEBI" id="CHEBI:456215"/>
        <dbReference type="EC" id="6.1.1.14"/>
    </reaction>
</comment>
<comment type="subunit">
    <text evidence="1">Tetramer of two alpha and two beta subunits.</text>
</comment>
<comment type="subcellular location">
    <subcellularLocation>
        <location evidence="1">Cytoplasm</location>
    </subcellularLocation>
</comment>
<comment type="similarity">
    <text evidence="1">Belongs to the class-II aminoacyl-tRNA synthetase family.</text>
</comment>
<sequence>MKKLSFQQIILTLQNYWQDYGCAILQPYDAHVGAGTFHPATVLRCLGTKPWSVAYVQPSRRPGDSRYGMHPNRMQHYYQFQVILKPSPDNIQELYLKSLEYLGIDLKIHDIRFVEDDWESPTLGAAGLGWEVWCNGMEVSQFTYMQQIGGIECRPVAGEITYGLERLALYIQGVDEVRELDWNGQVGEKALKYGEVDFEAEWQFSKYNLELADSEMLLRHFKDSEDQCERLIKANLPMPAYDECLKASHAFNQLNALGVISVTERASYVLRVRHLARICCTKWLEMNK</sequence>
<protein>
    <recommendedName>
        <fullName evidence="1">Glycine--tRNA ligase alpha subunit</fullName>
        <ecNumber evidence="1">6.1.1.14</ecNumber>
    </recommendedName>
    <alternativeName>
        <fullName evidence="1">Glycyl-tRNA synthetase alpha subunit</fullName>
        <shortName evidence="1">GlyRS</shortName>
    </alternativeName>
</protein>